<gene>
    <name evidence="1" type="primary">gltX2</name>
    <name type="ordered locus">TM_1875</name>
</gene>
<protein>
    <recommendedName>
        <fullName evidence="1">Glutamate--tRNA ligase 2</fullName>
        <ecNumber evidence="1">6.1.1.17</ecNumber>
    </recommendedName>
    <alternativeName>
        <fullName evidence="1">Glutamyl-tRNA synthetase 2</fullName>
        <shortName evidence="1">GluRS 2</shortName>
    </alternativeName>
</protein>
<keyword id="KW-0002">3D-structure</keyword>
<keyword id="KW-0030">Aminoacyl-tRNA synthetase</keyword>
<keyword id="KW-0067">ATP-binding</keyword>
<keyword id="KW-0963">Cytoplasm</keyword>
<keyword id="KW-0436">Ligase</keyword>
<keyword id="KW-0547">Nucleotide-binding</keyword>
<keyword id="KW-0648">Protein biosynthesis</keyword>
<keyword id="KW-1185">Reference proteome</keyword>
<proteinExistence type="evidence at protein level"/>
<feature type="chain" id="PRO_0000119681" description="Glutamate--tRNA ligase 2">
    <location>
        <begin position="1"/>
        <end position="487"/>
    </location>
</feature>
<feature type="short sequence motif" description="'HIGH' region" evidence="1">
    <location>
        <begin position="31"/>
        <end position="41"/>
    </location>
</feature>
<feature type="short sequence motif" description="'KMSKS' region" evidence="1">
    <location>
        <begin position="254"/>
        <end position="258"/>
    </location>
</feature>
<feature type="binding site" evidence="1">
    <location>
        <position position="257"/>
    </location>
    <ligand>
        <name>ATP</name>
        <dbReference type="ChEBI" id="CHEBI:30616"/>
    </ligand>
</feature>
<feature type="strand" evidence="2">
    <location>
        <begin position="26"/>
        <end position="29"/>
    </location>
</feature>
<feature type="strand" evidence="2">
    <location>
        <begin position="34"/>
        <end position="36"/>
    </location>
</feature>
<feature type="helix" evidence="2">
    <location>
        <begin position="39"/>
        <end position="55"/>
    </location>
</feature>
<feature type="strand" evidence="2">
    <location>
        <begin position="58"/>
        <end position="61"/>
    </location>
</feature>
<feature type="turn" evidence="2">
    <location>
        <begin position="68"/>
        <end position="70"/>
    </location>
</feature>
<feature type="helix" evidence="2">
    <location>
        <begin position="73"/>
        <end position="85"/>
    </location>
</feature>
<feature type="strand" evidence="2">
    <location>
        <begin position="91"/>
        <end position="93"/>
    </location>
</feature>
<feature type="turn" evidence="2">
    <location>
        <begin position="94"/>
        <end position="96"/>
    </location>
</feature>
<feature type="helix" evidence="2">
    <location>
        <begin position="105"/>
        <end position="107"/>
    </location>
</feature>
<feature type="helix" evidence="2">
    <location>
        <begin position="109"/>
        <end position="121"/>
    </location>
</feature>
<feature type="strand" evidence="2">
    <location>
        <begin position="124"/>
        <end position="130"/>
    </location>
</feature>
<feature type="strand" evidence="2">
    <location>
        <begin position="132"/>
        <end position="134"/>
    </location>
</feature>
<feature type="strand" evidence="2">
    <location>
        <begin position="137"/>
        <end position="144"/>
    </location>
</feature>
<feature type="helix" evidence="2">
    <location>
        <begin position="147"/>
        <end position="151"/>
    </location>
</feature>
<feature type="strand" evidence="2">
    <location>
        <begin position="156"/>
        <end position="160"/>
    </location>
</feature>
<feature type="strand" evidence="2">
    <location>
        <begin position="164"/>
        <end position="171"/>
    </location>
</feature>
<feature type="turn" evidence="2">
    <location>
        <begin position="172"/>
        <end position="174"/>
    </location>
</feature>
<feature type="strand" evidence="2">
    <location>
        <begin position="175"/>
        <end position="180"/>
    </location>
</feature>
<feature type="helix" evidence="2">
    <location>
        <begin position="181"/>
        <end position="183"/>
    </location>
</feature>
<feature type="strand" evidence="2">
    <location>
        <begin position="187"/>
        <end position="190"/>
    </location>
</feature>
<feature type="turn" evidence="3">
    <location>
        <begin position="192"/>
        <end position="194"/>
    </location>
</feature>
<feature type="helix" evidence="2">
    <location>
        <begin position="198"/>
        <end position="208"/>
    </location>
</feature>
<feature type="strand" evidence="2">
    <location>
        <begin position="212"/>
        <end position="217"/>
    </location>
</feature>
<feature type="helix" evidence="2">
    <location>
        <begin position="218"/>
        <end position="223"/>
    </location>
</feature>
<feature type="helix" evidence="2">
    <location>
        <begin position="224"/>
        <end position="234"/>
    </location>
</feature>
<feature type="strand" evidence="2">
    <location>
        <begin position="240"/>
        <end position="244"/>
    </location>
</feature>
<feature type="strand" evidence="2">
    <location>
        <begin position="252"/>
        <end position="254"/>
    </location>
</feature>
<feature type="turn" evidence="2">
    <location>
        <begin position="257"/>
        <end position="259"/>
    </location>
</feature>
<feature type="strand" evidence="4">
    <location>
        <begin position="261"/>
        <end position="263"/>
    </location>
</feature>
<feature type="helix" evidence="2">
    <location>
        <begin position="264"/>
        <end position="270"/>
    </location>
</feature>
<feature type="helix" evidence="2">
    <location>
        <begin position="274"/>
        <end position="283"/>
    </location>
</feature>
<feature type="helix" evidence="2">
    <location>
        <begin position="296"/>
        <end position="299"/>
    </location>
</feature>
<feature type="helix" evidence="2">
    <location>
        <begin position="300"/>
        <end position="302"/>
    </location>
</feature>
<feature type="helix" evidence="2">
    <location>
        <begin position="305"/>
        <end position="307"/>
    </location>
</feature>
<feature type="helix" evidence="2">
    <location>
        <begin position="317"/>
        <end position="330"/>
    </location>
</feature>
<feature type="helix" evidence="2">
    <location>
        <begin position="333"/>
        <end position="347"/>
    </location>
</feature>
<feature type="helix" evidence="2">
    <location>
        <begin position="356"/>
        <end position="366"/>
    </location>
</feature>
<feature type="turn" evidence="3">
    <location>
        <begin position="367"/>
        <end position="369"/>
    </location>
</feature>
<feature type="helix" evidence="2">
    <location>
        <begin position="373"/>
        <end position="384"/>
    </location>
</feature>
<feature type="helix" evidence="2">
    <location>
        <begin position="392"/>
        <end position="397"/>
    </location>
</feature>
<feature type="turn" evidence="2">
    <location>
        <begin position="398"/>
        <end position="400"/>
    </location>
</feature>
<feature type="helix" evidence="2">
    <location>
        <begin position="404"/>
        <end position="416"/>
    </location>
</feature>
<feature type="helix" evidence="2">
    <location>
        <begin position="423"/>
        <end position="435"/>
    </location>
</feature>
<feature type="helix" evidence="2">
    <location>
        <begin position="441"/>
        <end position="453"/>
    </location>
</feature>
<feature type="strand" evidence="3">
    <location>
        <begin position="454"/>
        <end position="457"/>
    </location>
</feature>
<feature type="helix" evidence="2">
    <location>
        <begin position="461"/>
        <end position="468"/>
    </location>
</feature>
<feature type="helix" evidence="2">
    <location>
        <begin position="470"/>
        <end position="484"/>
    </location>
</feature>
<name>SYE2_THEMA</name>
<reference key="1">
    <citation type="journal article" date="1999" name="Nature">
        <title>Evidence for lateral gene transfer between Archaea and Bacteria from genome sequence of Thermotoga maritima.</title>
        <authorList>
            <person name="Nelson K.E."/>
            <person name="Clayton R.A."/>
            <person name="Gill S.R."/>
            <person name="Gwinn M.L."/>
            <person name="Dodson R.J."/>
            <person name="Haft D.H."/>
            <person name="Hickey E.K."/>
            <person name="Peterson J.D."/>
            <person name="Nelson W.C."/>
            <person name="Ketchum K.A."/>
            <person name="McDonald L.A."/>
            <person name="Utterback T.R."/>
            <person name="Malek J.A."/>
            <person name="Linher K.D."/>
            <person name="Garrett M.M."/>
            <person name="Stewart A.M."/>
            <person name="Cotton M.D."/>
            <person name="Pratt M.S."/>
            <person name="Phillips C.A."/>
            <person name="Richardson D.L."/>
            <person name="Heidelberg J.F."/>
            <person name="Sutton G.G."/>
            <person name="Fleischmann R.D."/>
            <person name="Eisen J.A."/>
            <person name="White O."/>
            <person name="Salzberg S.L."/>
            <person name="Smith H.O."/>
            <person name="Venter J.C."/>
            <person name="Fraser C.M."/>
        </authorList>
    </citation>
    <scope>NUCLEOTIDE SEQUENCE [LARGE SCALE GENOMIC DNA]</scope>
    <source>
        <strain>ATCC 43589 / DSM 3109 / JCM 10099 / NBRC 100826 / MSB8</strain>
    </source>
</reference>
<accession>Q9X2I8</accession>
<dbReference type="EC" id="6.1.1.17" evidence="1"/>
<dbReference type="EMBL" id="AE000512">
    <property type="protein sequence ID" value="AAD36937.1"/>
    <property type="molecule type" value="Genomic_DNA"/>
</dbReference>
<dbReference type="PIR" id="F72200">
    <property type="entry name" value="F72200"/>
</dbReference>
<dbReference type="RefSeq" id="NP_229671.1">
    <property type="nucleotide sequence ID" value="NC_000853.1"/>
</dbReference>
<dbReference type="PDB" id="3AFH">
    <property type="method" value="X-ray"/>
    <property type="resolution" value="2.00 A"/>
    <property type="chains" value="A=2-487"/>
</dbReference>
<dbReference type="PDB" id="3AKZ">
    <property type="method" value="X-ray"/>
    <property type="resolution" value="2.90 A"/>
    <property type="chains" value="A/B/C/D=1-487"/>
</dbReference>
<dbReference type="PDB" id="3AL0">
    <property type="method" value="X-ray"/>
    <property type="resolution" value="3.37 A"/>
    <property type="chains" value="C=1-487"/>
</dbReference>
<dbReference type="PDBsum" id="3AFH"/>
<dbReference type="PDBsum" id="3AKZ"/>
<dbReference type="PDBsum" id="3AL0"/>
<dbReference type="SMR" id="Q9X2I8"/>
<dbReference type="DIP" id="DIP-59231N"/>
<dbReference type="IntAct" id="Q9X2I8">
    <property type="interactions" value="1"/>
</dbReference>
<dbReference type="STRING" id="243274.TM_1875"/>
<dbReference type="PaxDb" id="243274-THEMA_04795"/>
<dbReference type="EnsemblBacteria" id="AAD36937">
    <property type="protein sequence ID" value="AAD36937"/>
    <property type="gene ID" value="TM_1875"/>
</dbReference>
<dbReference type="KEGG" id="tma:TM1875"/>
<dbReference type="PATRIC" id="fig|243274.5.peg.1896"/>
<dbReference type="eggNOG" id="COG0008">
    <property type="taxonomic scope" value="Bacteria"/>
</dbReference>
<dbReference type="InParanoid" id="Q9X2I8"/>
<dbReference type="OrthoDB" id="9807503at2"/>
<dbReference type="BRENDA" id="6.1.1.24">
    <property type="organism ID" value="6331"/>
</dbReference>
<dbReference type="EvolutionaryTrace" id="Q9X2I8"/>
<dbReference type="Proteomes" id="UP000008183">
    <property type="component" value="Chromosome"/>
</dbReference>
<dbReference type="GO" id="GO:0005829">
    <property type="term" value="C:cytosol"/>
    <property type="evidence" value="ECO:0000318"/>
    <property type="project" value="GO_Central"/>
</dbReference>
<dbReference type="GO" id="GO:0005524">
    <property type="term" value="F:ATP binding"/>
    <property type="evidence" value="ECO:0007669"/>
    <property type="project" value="UniProtKB-UniRule"/>
</dbReference>
<dbReference type="GO" id="GO:0004818">
    <property type="term" value="F:glutamate-tRNA ligase activity"/>
    <property type="evidence" value="ECO:0000318"/>
    <property type="project" value="GO_Central"/>
</dbReference>
<dbReference type="GO" id="GO:0000049">
    <property type="term" value="F:tRNA binding"/>
    <property type="evidence" value="ECO:0007669"/>
    <property type="project" value="InterPro"/>
</dbReference>
<dbReference type="GO" id="GO:0008270">
    <property type="term" value="F:zinc ion binding"/>
    <property type="evidence" value="ECO:0007669"/>
    <property type="project" value="InterPro"/>
</dbReference>
<dbReference type="GO" id="GO:0006424">
    <property type="term" value="P:glutamyl-tRNA aminoacylation"/>
    <property type="evidence" value="ECO:0000318"/>
    <property type="project" value="GO_Central"/>
</dbReference>
<dbReference type="CDD" id="cd00808">
    <property type="entry name" value="GluRS_core"/>
    <property type="match status" value="1"/>
</dbReference>
<dbReference type="FunFam" id="1.10.1160.10:FF:000003">
    <property type="entry name" value="Glutamate--tRNA ligase 2"/>
    <property type="match status" value="1"/>
</dbReference>
<dbReference type="Gene3D" id="1.10.10.350">
    <property type="match status" value="1"/>
</dbReference>
<dbReference type="Gene3D" id="1.10.8.70">
    <property type="entry name" value="Glutamate-tRNA synthetase, class I, anticodon-binding domain 1"/>
    <property type="match status" value="1"/>
</dbReference>
<dbReference type="Gene3D" id="1.10.1160.10">
    <property type="entry name" value="Glutamyl-trna Synthetase, Domain 2"/>
    <property type="match status" value="1"/>
</dbReference>
<dbReference type="Gene3D" id="3.90.800.10">
    <property type="entry name" value="Glutamyl-tRNA Synthetase, Domain 3"/>
    <property type="match status" value="1"/>
</dbReference>
<dbReference type="Gene3D" id="3.40.50.620">
    <property type="entry name" value="HUPs"/>
    <property type="match status" value="1"/>
</dbReference>
<dbReference type="HAMAP" id="MF_00022">
    <property type="entry name" value="Glu_tRNA_synth_type1"/>
    <property type="match status" value="1"/>
</dbReference>
<dbReference type="InterPro" id="IPR045462">
    <property type="entry name" value="aa-tRNA-synth_I_cd-bd"/>
</dbReference>
<dbReference type="InterPro" id="IPR020751">
    <property type="entry name" value="aa-tRNA-synth_I_codon-bd_sub2"/>
</dbReference>
<dbReference type="InterPro" id="IPR001412">
    <property type="entry name" value="aa-tRNA-synth_I_CS"/>
</dbReference>
<dbReference type="InterPro" id="IPR008925">
    <property type="entry name" value="aa_tRNA-synth_I_cd-bd_sf"/>
</dbReference>
<dbReference type="InterPro" id="IPR004527">
    <property type="entry name" value="Glu-tRNA-ligase_bac/mito"/>
</dbReference>
<dbReference type="InterPro" id="IPR020752">
    <property type="entry name" value="Glu-tRNA-synth_I_codon-bd_sub1"/>
</dbReference>
<dbReference type="InterPro" id="IPR000924">
    <property type="entry name" value="Glu/Gln-tRNA-synth"/>
</dbReference>
<dbReference type="InterPro" id="IPR020058">
    <property type="entry name" value="Glu/Gln-tRNA-synth_Ib_cat-dom"/>
</dbReference>
<dbReference type="InterPro" id="IPR020061">
    <property type="entry name" value="Glu_tRNA_lig_a-bdl"/>
</dbReference>
<dbReference type="InterPro" id="IPR049940">
    <property type="entry name" value="GluQ/Sye"/>
</dbReference>
<dbReference type="InterPro" id="IPR033910">
    <property type="entry name" value="GluRS_core"/>
</dbReference>
<dbReference type="InterPro" id="IPR014729">
    <property type="entry name" value="Rossmann-like_a/b/a_fold"/>
</dbReference>
<dbReference type="NCBIfam" id="TIGR00464">
    <property type="entry name" value="gltX_bact"/>
    <property type="match status" value="1"/>
</dbReference>
<dbReference type="PANTHER" id="PTHR43311">
    <property type="entry name" value="GLUTAMATE--TRNA LIGASE"/>
    <property type="match status" value="1"/>
</dbReference>
<dbReference type="PANTHER" id="PTHR43311:SF2">
    <property type="entry name" value="GLUTAMATE--TRNA LIGASE, MITOCHONDRIAL-RELATED"/>
    <property type="match status" value="1"/>
</dbReference>
<dbReference type="Pfam" id="PF19269">
    <property type="entry name" value="Anticodon_2"/>
    <property type="match status" value="1"/>
</dbReference>
<dbReference type="Pfam" id="PF00749">
    <property type="entry name" value="tRNA-synt_1c"/>
    <property type="match status" value="2"/>
</dbReference>
<dbReference type="PRINTS" id="PR00987">
    <property type="entry name" value="TRNASYNTHGLU"/>
</dbReference>
<dbReference type="SUPFAM" id="SSF48163">
    <property type="entry name" value="An anticodon-binding domain of class I aminoacyl-tRNA synthetases"/>
    <property type="match status" value="1"/>
</dbReference>
<dbReference type="SUPFAM" id="SSF52374">
    <property type="entry name" value="Nucleotidylyl transferase"/>
    <property type="match status" value="1"/>
</dbReference>
<dbReference type="PROSITE" id="PS00178">
    <property type="entry name" value="AA_TRNA_LIGASE_I"/>
    <property type="match status" value="1"/>
</dbReference>
<evidence type="ECO:0000255" key="1">
    <source>
        <dbReference type="HAMAP-Rule" id="MF_00022"/>
    </source>
</evidence>
<evidence type="ECO:0007829" key="2">
    <source>
        <dbReference type="PDB" id="3AFH"/>
    </source>
</evidence>
<evidence type="ECO:0007829" key="3">
    <source>
        <dbReference type="PDB" id="3AKZ"/>
    </source>
</evidence>
<evidence type="ECO:0007829" key="4">
    <source>
        <dbReference type="PDB" id="3AL0"/>
    </source>
</evidence>
<organism>
    <name type="scientific">Thermotoga maritima (strain ATCC 43589 / DSM 3109 / JCM 10099 / NBRC 100826 / MSB8)</name>
    <dbReference type="NCBI Taxonomy" id="243274"/>
    <lineage>
        <taxon>Bacteria</taxon>
        <taxon>Thermotogati</taxon>
        <taxon>Thermotogota</taxon>
        <taxon>Thermotogae</taxon>
        <taxon>Thermotogales</taxon>
        <taxon>Thermotogaceae</taxon>
        <taxon>Thermotoga</taxon>
    </lineage>
</organism>
<sequence>MFITGAFFDILEVGPKKIRRCFELVRVRFAPSPTGHLHVGGARTALFNWMFARKEGGKFILRIEDTDTERSSREYEQQILESLRWCGLDWDEGPDIGGDFGPYRQSERLEIYREYAEKLVEDKRAYYVVYDKEDPSKELFTTYEYPHEYKEKGHPVTIKFKVLPGKTSFEDLLKGYMEFDNSTLEDFIIMKSNGFPTYNFAVVVDDHLMRISHVFRGEDHLSNTPKQLMIYEAFGWEAPVFMHIPLILGSDRTPLSKRHGATSVEHFRREGILSRALMNYLALLGWRVEGDEIFTIEEKLQSFDPKDISNKGVIFDYQKLEWVNGKHMRRIDLEDLKREFIEWAKYAGKEIPSVDERYFSETLRICREKVNTLSQLYDIMYPFMNDDYEYEKDYVEKFLKREEAERVLEEAKKAFKDLNSWNMEEIEKTLRDLSEKGLASKKVVFQLIRGAVTGKLVTPGLFETIEVLGKERTLKRLERTLQFLKKT</sequence>
<comment type="function">
    <text evidence="1">Catalyzes the attachment of glutamate to tRNA(Glu) in a two-step reaction: glutamate is first activated by ATP to form Glu-AMP and then transferred to the acceptor end of tRNA(Glu).</text>
</comment>
<comment type="catalytic activity">
    <reaction evidence="1">
        <text>tRNA(Glu) + L-glutamate + ATP = L-glutamyl-tRNA(Glu) + AMP + diphosphate</text>
        <dbReference type="Rhea" id="RHEA:23540"/>
        <dbReference type="Rhea" id="RHEA-COMP:9663"/>
        <dbReference type="Rhea" id="RHEA-COMP:9680"/>
        <dbReference type="ChEBI" id="CHEBI:29985"/>
        <dbReference type="ChEBI" id="CHEBI:30616"/>
        <dbReference type="ChEBI" id="CHEBI:33019"/>
        <dbReference type="ChEBI" id="CHEBI:78442"/>
        <dbReference type="ChEBI" id="CHEBI:78520"/>
        <dbReference type="ChEBI" id="CHEBI:456215"/>
        <dbReference type="EC" id="6.1.1.17"/>
    </reaction>
</comment>
<comment type="subunit">
    <text evidence="1">Monomer.</text>
</comment>
<comment type="subcellular location">
    <subcellularLocation>
        <location evidence="1">Cytoplasm</location>
    </subcellularLocation>
</comment>
<comment type="similarity">
    <text evidence="1">Belongs to the class-I aminoacyl-tRNA synthetase family. Glutamate--tRNA ligase type 1 subfamily.</text>
</comment>